<keyword id="KW-0238">DNA-binding</keyword>
<keyword id="KW-0408">Iron</keyword>
<keyword id="KW-0411">Iron-sulfur</keyword>
<keyword id="KW-0479">Metal-binding</keyword>
<keyword id="KW-0678">Repressor</keyword>
<keyword id="KW-0804">Transcription</keyword>
<keyword id="KW-0805">Transcription regulation</keyword>
<name>FEOC_YERPY</name>
<organism>
    <name type="scientific">Yersinia pseudotuberculosis serotype O:3 (strain YPIII)</name>
    <dbReference type="NCBI Taxonomy" id="502800"/>
    <lineage>
        <taxon>Bacteria</taxon>
        <taxon>Pseudomonadati</taxon>
        <taxon>Pseudomonadota</taxon>
        <taxon>Gammaproteobacteria</taxon>
        <taxon>Enterobacterales</taxon>
        <taxon>Yersiniaceae</taxon>
        <taxon>Yersinia</taxon>
    </lineage>
</organism>
<proteinExistence type="inferred from homology"/>
<protein>
    <recommendedName>
        <fullName evidence="1">Probable [Fe-S]-dependent transcriptional repressor</fullName>
    </recommendedName>
</protein>
<accession>B1JHZ7</accession>
<evidence type="ECO:0000255" key="1">
    <source>
        <dbReference type="HAMAP-Rule" id="MF_01586"/>
    </source>
</evidence>
<feature type="chain" id="PRO_1000201340" description="Probable [Fe-S]-dependent transcriptional repressor">
    <location>
        <begin position="1"/>
        <end position="85"/>
    </location>
</feature>
<feature type="binding site" evidence="1">
    <location>
        <position position="56"/>
    </location>
    <ligand>
        <name>iron-sulfur cluster</name>
        <dbReference type="ChEBI" id="CHEBI:30408"/>
    </ligand>
</feature>
<feature type="binding site" evidence="1">
    <location>
        <position position="61"/>
    </location>
    <ligand>
        <name>iron-sulfur cluster</name>
        <dbReference type="ChEBI" id="CHEBI:30408"/>
    </ligand>
</feature>
<feature type="binding site" evidence="1">
    <location>
        <position position="64"/>
    </location>
    <ligand>
        <name>iron-sulfur cluster</name>
        <dbReference type="ChEBI" id="CHEBI:30408"/>
    </ligand>
</feature>
<feature type="binding site" evidence="1">
    <location>
        <position position="71"/>
    </location>
    <ligand>
        <name>iron-sulfur cluster</name>
        <dbReference type="ChEBI" id="CHEBI:30408"/>
    </ligand>
</feature>
<reference key="1">
    <citation type="submission" date="2008-02" db="EMBL/GenBank/DDBJ databases">
        <title>Complete sequence of Yersinia pseudotuberculosis YPIII.</title>
        <authorList>
            <consortium name="US DOE Joint Genome Institute"/>
            <person name="Copeland A."/>
            <person name="Lucas S."/>
            <person name="Lapidus A."/>
            <person name="Glavina del Rio T."/>
            <person name="Dalin E."/>
            <person name="Tice H."/>
            <person name="Bruce D."/>
            <person name="Goodwin L."/>
            <person name="Pitluck S."/>
            <person name="Munk A.C."/>
            <person name="Brettin T."/>
            <person name="Detter J.C."/>
            <person name="Han C."/>
            <person name="Tapia R."/>
            <person name="Schmutz J."/>
            <person name="Larimer F."/>
            <person name="Land M."/>
            <person name="Hauser L."/>
            <person name="Challacombe J.F."/>
            <person name="Green L."/>
            <person name="Lindler L.E."/>
            <person name="Nikolich M.P."/>
            <person name="Richardson P."/>
        </authorList>
    </citation>
    <scope>NUCLEOTIDE SEQUENCE [LARGE SCALE GENOMIC DNA]</scope>
    <source>
        <strain>YPIII</strain>
    </source>
</reference>
<comment type="function">
    <text evidence="1">May function as a transcriptional regulator that controls feoABC expression.</text>
</comment>
<comment type="similarity">
    <text evidence="1">Belongs to the FeoC family.</text>
</comment>
<gene>
    <name evidence="1" type="primary">feoC</name>
    <name type="ordered locus">YPK_0167</name>
</gene>
<sequence length="85" mass="9232">MASLLQLRDAIALNGSAEASQLSRQLAIPLPLVNAMLEKLTAMGKIERIELDHSGCLTGSCKSCPEGHQHCNTVIYQLKEPHAHQ</sequence>
<dbReference type="EMBL" id="CP000950">
    <property type="protein sequence ID" value="ACA66480.1"/>
    <property type="molecule type" value="Genomic_DNA"/>
</dbReference>
<dbReference type="RefSeq" id="WP_002208920.1">
    <property type="nucleotide sequence ID" value="NZ_CP009792.1"/>
</dbReference>
<dbReference type="SMR" id="B1JHZ7"/>
<dbReference type="KEGG" id="ypy:YPK_0167"/>
<dbReference type="PATRIC" id="fig|502800.11.peg.774"/>
<dbReference type="GO" id="GO:0003677">
    <property type="term" value="F:DNA binding"/>
    <property type="evidence" value="ECO:0007669"/>
    <property type="project" value="UniProtKB-KW"/>
</dbReference>
<dbReference type="GO" id="GO:0005506">
    <property type="term" value="F:iron ion binding"/>
    <property type="evidence" value="ECO:0007669"/>
    <property type="project" value="UniProtKB-UniRule"/>
</dbReference>
<dbReference type="GO" id="GO:0051536">
    <property type="term" value="F:iron-sulfur cluster binding"/>
    <property type="evidence" value="ECO:0007669"/>
    <property type="project" value="UniProtKB-KW"/>
</dbReference>
<dbReference type="Gene3D" id="1.10.10.10">
    <property type="entry name" value="Winged helix-like DNA-binding domain superfamily/Winged helix DNA-binding domain"/>
    <property type="match status" value="1"/>
</dbReference>
<dbReference type="HAMAP" id="MF_01586">
    <property type="entry name" value="FeoC"/>
    <property type="match status" value="1"/>
</dbReference>
<dbReference type="InterPro" id="IPR023732">
    <property type="entry name" value="FeoC"/>
</dbReference>
<dbReference type="InterPro" id="IPR015102">
    <property type="entry name" value="Tscrpt_reg_HTH_FeoC"/>
</dbReference>
<dbReference type="InterPro" id="IPR036388">
    <property type="entry name" value="WH-like_DNA-bd_sf"/>
</dbReference>
<dbReference type="InterPro" id="IPR036390">
    <property type="entry name" value="WH_DNA-bd_sf"/>
</dbReference>
<dbReference type="Pfam" id="PF09012">
    <property type="entry name" value="FeoC"/>
    <property type="match status" value="1"/>
</dbReference>
<dbReference type="SUPFAM" id="SSF46785">
    <property type="entry name" value="Winged helix' DNA-binding domain"/>
    <property type="match status" value="1"/>
</dbReference>